<keyword id="KW-0150">Chloroplast</keyword>
<keyword id="KW-0934">Plastid</keyword>
<keyword id="KW-0687">Ribonucleoprotein</keyword>
<keyword id="KW-0689">Ribosomal protein</keyword>
<accession>Q20EV5</accession>
<feature type="chain" id="PRO_0000352143" description="Small ribosomal subunit protein uS2c">
    <location>
        <begin position="1"/>
        <end position="238"/>
    </location>
</feature>
<gene>
    <name type="primary">rps2</name>
</gene>
<organism>
    <name type="scientific">Oltmannsiellopsis viridis</name>
    <name type="common">Marine flagellate</name>
    <name type="synonym">Oltmannsiella viridis</name>
    <dbReference type="NCBI Taxonomy" id="51324"/>
    <lineage>
        <taxon>Eukaryota</taxon>
        <taxon>Viridiplantae</taxon>
        <taxon>Chlorophyta</taxon>
        <taxon>Ulvophyceae</taxon>
        <taxon>Oltmannsiellopsidales</taxon>
        <taxon>Oltmannsiellopsidaceae</taxon>
        <taxon>Oltmannsiellopsis</taxon>
    </lineage>
</organism>
<comment type="subcellular location">
    <subcellularLocation>
        <location>Plastid</location>
        <location>Chloroplast</location>
    </subcellularLocation>
</comment>
<comment type="similarity">
    <text evidence="1">Belongs to the universal ribosomal protein uS2 family.</text>
</comment>
<sequence length="238" mass="26688">MKVSIEEMVQVGMHFGHQSRKWNPKMAPFIYTERNGIHIIDLIQTHAYLKQVSQFLTESSAAGKTILFVGTKKQASGLIAKVALQCNSPYVNQRWLGGMLTNWKTIQTSIKKLNEFDYQEKTGGFDLLSKQEAAQARKEKARLQKYLGGMKHMTTIPDVVVIVGQPDELNAVAECRRLGIRSVTILDTDCDPSLADLFVPANDDSVASIQLILTEFLRSILNGQQMFSEKQQRGKKTA</sequence>
<reference key="1">
    <citation type="journal article" date="2006" name="BMC Biol.">
        <title>The complete chloroplast DNA sequence of the green alga Oltmannsiellopsis viridis reveals a distinctive quadripartite architecture in the chloroplast genome of early diverging ulvophytes.</title>
        <authorList>
            <person name="Pombert J.-F."/>
            <person name="Lemieux C."/>
            <person name="Turmel M."/>
        </authorList>
    </citation>
    <scope>NUCLEOTIDE SEQUENCE [LARGE SCALE GENOMIC DNA]</scope>
</reference>
<evidence type="ECO:0000305" key="1"/>
<name>RR2_OLTVI</name>
<geneLocation type="chloroplast"/>
<proteinExistence type="inferred from homology"/>
<protein>
    <recommendedName>
        <fullName evidence="1">Small ribosomal subunit protein uS2c</fullName>
    </recommendedName>
    <alternativeName>
        <fullName>30S ribosomal protein S2, chloroplastic</fullName>
    </alternativeName>
</protein>
<dbReference type="EMBL" id="DQ291132">
    <property type="protein sequence ID" value="ABB81958.1"/>
    <property type="molecule type" value="Genomic_DNA"/>
</dbReference>
<dbReference type="RefSeq" id="YP_635890.1">
    <property type="nucleotide sequence ID" value="NC_008099.1"/>
</dbReference>
<dbReference type="SMR" id="Q20EV5"/>
<dbReference type="GeneID" id="4100084"/>
<dbReference type="GO" id="GO:0009507">
    <property type="term" value="C:chloroplast"/>
    <property type="evidence" value="ECO:0007669"/>
    <property type="project" value="UniProtKB-SubCell"/>
</dbReference>
<dbReference type="GO" id="GO:0005763">
    <property type="term" value="C:mitochondrial small ribosomal subunit"/>
    <property type="evidence" value="ECO:0007669"/>
    <property type="project" value="TreeGrafter"/>
</dbReference>
<dbReference type="GO" id="GO:0003735">
    <property type="term" value="F:structural constituent of ribosome"/>
    <property type="evidence" value="ECO:0007669"/>
    <property type="project" value="InterPro"/>
</dbReference>
<dbReference type="GO" id="GO:0006412">
    <property type="term" value="P:translation"/>
    <property type="evidence" value="ECO:0007669"/>
    <property type="project" value="UniProtKB-UniRule"/>
</dbReference>
<dbReference type="CDD" id="cd01425">
    <property type="entry name" value="RPS2"/>
    <property type="match status" value="1"/>
</dbReference>
<dbReference type="FunFam" id="1.10.287.610:FF:000001">
    <property type="entry name" value="30S ribosomal protein S2"/>
    <property type="match status" value="1"/>
</dbReference>
<dbReference type="Gene3D" id="3.40.50.10490">
    <property type="entry name" value="Glucose-6-phosphate isomerase like protein, domain 1"/>
    <property type="match status" value="1"/>
</dbReference>
<dbReference type="Gene3D" id="1.10.287.610">
    <property type="entry name" value="Helix hairpin bin"/>
    <property type="match status" value="1"/>
</dbReference>
<dbReference type="HAMAP" id="MF_00291_B">
    <property type="entry name" value="Ribosomal_uS2_B"/>
    <property type="match status" value="1"/>
</dbReference>
<dbReference type="InterPro" id="IPR001865">
    <property type="entry name" value="Ribosomal_uS2"/>
</dbReference>
<dbReference type="InterPro" id="IPR005706">
    <property type="entry name" value="Ribosomal_uS2_bac/mit/plastid"/>
</dbReference>
<dbReference type="InterPro" id="IPR023591">
    <property type="entry name" value="Ribosomal_uS2_flav_dom_sf"/>
</dbReference>
<dbReference type="NCBIfam" id="TIGR01011">
    <property type="entry name" value="rpsB_bact"/>
    <property type="match status" value="1"/>
</dbReference>
<dbReference type="PANTHER" id="PTHR12534">
    <property type="entry name" value="30S RIBOSOMAL PROTEIN S2 PROKARYOTIC AND ORGANELLAR"/>
    <property type="match status" value="1"/>
</dbReference>
<dbReference type="PANTHER" id="PTHR12534:SF0">
    <property type="entry name" value="SMALL RIBOSOMAL SUBUNIT PROTEIN US2M"/>
    <property type="match status" value="1"/>
</dbReference>
<dbReference type="Pfam" id="PF00318">
    <property type="entry name" value="Ribosomal_S2"/>
    <property type="match status" value="1"/>
</dbReference>
<dbReference type="PRINTS" id="PR00395">
    <property type="entry name" value="RIBOSOMALS2"/>
</dbReference>
<dbReference type="SUPFAM" id="SSF52313">
    <property type="entry name" value="Ribosomal protein S2"/>
    <property type="match status" value="1"/>
</dbReference>